<feature type="chain" id="PRO_0000410819" description="Protein HRI1">
    <location>
        <begin position="1"/>
        <end position="244"/>
    </location>
</feature>
<feature type="modified residue" description="Phosphoserine" evidence="2">
    <location>
        <position position="143"/>
    </location>
</feature>
<reference key="1">
    <citation type="journal article" date="2011" name="PLoS Genet.">
        <title>Whole-genome comparison reveals novel genetic elements that characterize the genome of industrial strains of Saccharomyces cerevisiae.</title>
        <authorList>
            <person name="Borneman A.R."/>
            <person name="Desany B.A."/>
            <person name="Riches D."/>
            <person name="Affourtit J.P."/>
            <person name="Forgan A.H."/>
            <person name="Pretorius I.S."/>
            <person name="Egholm M."/>
            <person name="Chambers P.J."/>
        </authorList>
    </citation>
    <scope>NUCLEOTIDE SEQUENCE [LARGE SCALE GENOMIC DNA]</scope>
    <source>
        <strain>Lalvin QA23</strain>
    </source>
</reference>
<accession>E7KS00</accession>
<evidence type="ECO:0000250" key="1"/>
<evidence type="ECO:0000250" key="2">
    <source>
        <dbReference type="UniProtKB" id="Q05905"/>
    </source>
</evidence>
<evidence type="ECO:0000305" key="3"/>
<name>HRI1_YEASL</name>
<sequence>MPALLKRLLFQVGPHPNERTFTLSSVSTDGHYISLRPFVKPSGDELSFPFEWAFAGTNETVKVNDQGNGVVTQDFNFWLDTNVYLNVPNTHRGEVNTTWKNWDSGCVEETGAVYPFGADKESVSFRELWQPVDPSREDLVIVSPNBEKFSSNARSIVLKVTDEAYDGLVIVIGRWIQGFLSQKNNNTIEGLNFIRLLEKDSGKSEFLLSYGKEVNKIPQSYENLKKGSTVTSNGLNWEVIEYHA</sequence>
<proteinExistence type="inferred from homology"/>
<keyword id="KW-0963">Cytoplasm</keyword>
<keyword id="KW-0539">Nucleus</keyword>
<keyword id="KW-0597">Phosphoprotein</keyword>
<organism>
    <name type="scientific">Saccharomyces cerevisiae (strain Lalvin QA23)</name>
    <name type="common">Baker's yeast</name>
    <dbReference type="NCBI Taxonomy" id="764098"/>
    <lineage>
        <taxon>Eukaryota</taxon>
        <taxon>Fungi</taxon>
        <taxon>Dikarya</taxon>
        <taxon>Ascomycota</taxon>
        <taxon>Saccharomycotina</taxon>
        <taxon>Saccharomycetes</taxon>
        <taxon>Saccharomycetales</taxon>
        <taxon>Saccharomycetaceae</taxon>
        <taxon>Saccharomyces</taxon>
    </lineage>
</organism>
<comment type="subunit">
    <text evidence="1">Interacts with HRR25. May interact with SEC72.</text>
</comment>
<comment type="subcellular location">
    <subcellularLocation>
        <location evidence="1">Cytoplasm</location>
    </subcellularLocation>
    <subcellularLocation>
        <location evidence="1">Nucleus</location>
    </subcellularLocation>
</comment>
<comment type="similarity">
    <text evidence="3">Belongs to the HRI1 family.</text>
</comment>
<protein>
    <recommendedName>
        <fullName>Protein HRI1</fullName>
    </recommendedName>
    <alternativeName>
        <fullName>HRR25-interacting protein 1</fullName>
    </alternativeName>
</protein>
<gene>
    <name type="primary">HRI1</name>
    <name type="ORF">QA23_3354</name>
</gene>
<dbReference type="EMBL" id="ADVV01000064">
    <property type="protein sequence ID" value="EGA81646.1"/>
    <property type="molecule type" value="Genomic_DNA"/>
</dbReference>
<dbReference type="HOGENOM" id="CLU_097607_0_0_1"/>
<dbReference type="OrthoDB" id="17082at4893"/>
<dbReference type="GO" id="GO:0005737">
    <property type="term" value="C:cytoplasm"/>
    <property type="evidence" value="ECO:0007669"/>
    <property type="project" value="UniProtKB-SubCell"/>
</dbReference>
<dbReference type="GO" id="GO:0005634">
    <property type="term" value="C:nucleus"/>
    <property type="evidence" value="ECO:0007669"/>
    <property type="project" value="UniProtKB-SubCell"/>
</dbReference>
<dbReference type="CDD" id="cd11693">
    <property type="entry name" value="HRI1_C_like"/>
    <property type="match status" value="1"/>
</dbReference>
<dbReference type="CDD" id="cd11692">
    <property type="entry name" value="HRI1_N_like"/>
    <property type="match status" value="1"/>
</dbReference>
<dbReference type="Gene3D" id="2.40.128.310">
    <property type="entry name" value="Protein HRI1, C-terminal domain"/>
    <property type="match status" value="1"/>
</dbReference>
<dbReference type="Gene3D" id="2.40.128.320">
    <property type="entry name" value="Protein HRI1, N-terminal domain"/>
    <property type="match status" value="1"/>
</dbReference>
<dbReference type="InterPro" id="IPR031818">
    <property type="entry name" value="Hri1"/>
</dbReference>
<dbReference type="InterPro" id="IPR038744">
    <property type="entry name" value="Hri1_N"/>
</dbReference>
<dbReference type="InterPro" id="IPR043047">
    <property type="entry name" value="Hri1_N_sf"/>
</dbReference>
<dbReference type="Pfam" id="PF16815">
    <property type="entry name" value="HRI1"/>
    <property type="match status" value="1"/>
</dbReference>